<feature type="chain" id="PRO_0000200196" description="Homeobox protein Hox-C12b">
    <location>
        <begin position="1"/>
        <end position="283"/>
    </location>
</feature>
<feature type="DNA-binding region" description="Homeobox" evidence="2">
    <location>
        <begin position="215"/>
        <end position="274"/>
    </location>
</feature>
<feature type="sequence conflict" description="In Ref. 2; AAY67941." evidence="4" ref="2">
    <original>G</original>
    <variation>K</variation>
    <location>
        <position position="118"/>
    </location>
</feature>
<evidence type="ECO:0000250" key="1"/>
<evidence type="ECO:0000255" key="2">
    <source>
        <dbReference type="PROSITE-ProRule" id="PRU00108"/>
    </source>
</evidence>
<evidence type="ECO:0000269" key="3">
    <source>
    </source>
</evidence>
<evidence type="ECO:0000305" key="4"/>
<keyword id="KW-0217">Developmental protein</keyword>
<keyword id="KW-0238">DNA-binding</keyword>
<keyword id="KW-0371">Homeobox</keyword>
<keyword id="KW-0539">Nucleus</keyword>
<keyword id="KW-1185">Reference proteome</keyword>
<keyword id="KW-0804">Transcription</keyword>
<keyword id="KW-0805">Transcription regulation</keyword>
<dbReference type="EMBL" id="AF071260">
    <property type="protein sequence ID" value="AAD15953.1"/>
    <property type="molecule type" value="Genomic_DNA"/>
</dbReference>
<dbReference type="EMBL" id="DQ060563">
    <property type="protein sequence ID" value="AAY67941.1"/>
    <property type="molecule type" value="mRNA"/>
</dbReference>
<dbReference type="RefSeq" id="NP_571620.1">
    <property type="nucleotide sequence ID" value="NM_131545.1"/>
</dbReference>
<dbReference type="SMR" id="Q9YGT0"/>
<dbReference type="STRING" id="7955.ENSDARP00000132869"/>
<dbReference type="PaxDb" id="7955-ENSDARP00000067695"/>
<dbReference type="GeneID" id="58062"/>
<dbReference type="KEGG" id="dre:58062"/>
<dbReference type="AGR" id="ZFIN:ZDB-GENE-000329-17"/>
<dbReference type="CTD" id="58062"/>
<dbReference type="ZFIN" id="ZDB-GENE-000329-17">
    <property type="gene designation" value="hoxc12b"/>
</dbReference>
<dbReference type="eggNOG" id="KOG0487">
    <property type="taxonomic scope" value="Eukaryota"/>
</dbReference>
<dbReference type="InParanoid" id="Q9YGT0"/>
<dbReference type="OrthoDB" id="8681695at2759"/>
<dbReference type="PhylomeDB" id="Q9YGT0"/>
<dbReference type="PRO" id="PR:Q9YGT0"/>
<dbReference type="Proteomes" id="UP000000437">
    <property type="component" value="Chromosome 11"/>
</dbReference>
<dbReference type="GO" id="GO:0005634">
    <property type="term" value="C:nucleus"/>
    <property type="evidence" value="ECO:0007669"/>
    <property type="project" value="UniProtKB-SubCell"/>
</dbReference>
<dbReference type="GO" id="GO:0000981">
    <property type="term" value="F:DNA-binding transcription factor activity, RNA polymerase II-specific"/>
    <property type="evidence" value="ECO:0007669"/>
    <property type="project" value="InterPro"/>
</dbReference>
<dbReference type="GO" id="GO:1990837">
    <property type="term" value="F:sequence-specific double-stranded DNA binding"/>
    <property type="evidence" value="ECO:0000318"/>
    <property type="project" value="GO_Central"/>
</dbReference>
<dbReference type="CDD" id="cd00086">
    <property type="entry name" value="homeodomain"/>
    <property type="match status" value="1"/>
</dbReference>
<dbReference type="Gene3D" id="1.10.10.60">
    <property type="entry name" value="Homeodomain-like"/>
    <property type="match status" value="1"/>
</dbReference>
<dbReference type="InterPro" id="IPR001356">
    <property type="entry name" value="HD"/>
</dbReference>
<dbReference type="InterPro" id="IPR020479">
    <property type="entry name" value="HD_metazoa"/>
</dbReference>
<dbReference type="InterPro" id="IPR017970">
    <property type="entry name" value="Homeobox_CS"/>
</dbReference>
<dbReference type="InterPro" id="IPR009057">
    <property type="entry name" value="Homeodomain-like_sf"/>
</dbReference>
<dbReference type="PANTHER" id="PTHR46440:SF2">
    <property type="entry name" value="HOMEOBOX PROTEIN HOX-C12"/>
    <property type="match status" value="1"/>
</dbReference>
<dbReference type="PANTHER" id="PTHR46440">
    <property type="entry name" value="HOMEOBOX PROTEIN HOX-D12-RELATED"/>
    <property type="match status" value="1"/>
</dbReference>
<dbReference type="Pfam" id="PF00046">
    <property type="entry name" value="Homeodomain"/>
    <property type="match status" value="1"/>
</dbReference>
<dbReference type="PRINTS" id="PR00024">
    <property type="entry name" value="HOMEOBOX"/>
</dbReference>
<dbReference type="SMART" id="SM00389">
    <property type="entry name" value="HOX"/>
    <property type="match status" value="1"/>
</dbReference>
<dbReference type="SUPFAM" id="SSF46689">
    <property type="entry name" value="Homeodomain-like"/>
    <property type="match status" value="1"/>
</dbReference>
<dbReference type="PROSITE" id="PS00027">
    <property type="entry name" value="HOMEOBOX_1"/>
    <property type="match status" value="1"/>
</dbReference>
<dbReference type="PROSITE" id="PS50071">
    <property type="entry name" value="HOMEOBOX_2"/>
    <property type="match status" value="1"/>
</dbReference>
<name>HXCCB_DANRE</name>
<comment type="function">
    <text evidence="1">Sequence-specific transcription factor which is part of a developmental regulatory system that provides cells with specific positional identities on the anterior-posterior axis.</text>
</comment>
<comment type="subcellular location">
    <subcellularLocation>
        <location evidence="2">Nucleus</location>
    </subcellularLocation>
</comment>
<comment type="developmental stage">
    <text evidence="3">Expressed both maternally and zygotically, from ova through to 48 hours post-fertilization.</text>
</comment>
<comment type="similarity">
    <text evidence="4">Belongs to the Abd-B homeobox family.</text>
</comment>
<sequence>MGEHNLFNPGFVGQLVNINARDAFYLSNFRASGGQLAGLQTLRLSRRDNVCSLPWNPSEACSGYPQSHISGPVTLNHTYNQSCDITRQEDNKCFYSDSACATSGGGDNNSTNLISKEGALDNSSVSITAENGQNNLNGMDNGGSYSKYDCLTPAEQPIPNPRLCRSLESVSGCSFINEGAKTSSGITHSLTSPDIQTSVAALNGGALWYPMHRQTRKKRKPYSKLQLNELEGEFILNEFITRQRRRELSDRLNLTDQQVKIWFQNRRMKKKRLLMREQALSYF</sequence>
<gene>
    <name type="primary">hoxc12b</name>
</gene>
<reference key="1">
    <citation type="journal article" date="1998" name="Science">
        <title>Zebrafish hox clusters and vertebrate genome evolution.</title>
        <authorList>
            <person name="Amores A."/>
            <person name="Force A."/>
            <person name="Yan Y.-L."/>
            <person name="Joly L."/>
            <person name="Amemiya C."/>
            <person name="Fritz A."/>
            <person name="Ho R.K."/>
            <person name="Langeland J."/>
            <person name="Prince V.E."/>
            <person name="Wang Y.-L."/>
            <person name="Westerfield M."/>
            <person name="Ekker M."/>
            <person name="Postlethwait J.H."/>
        </authorList>
    </citation>
    <scope>NUCLEOTIDE SEQUENCE [GENOMIC DNA]</scope>
</reference>
<reference key="2">
    <citation type="journal article" date="2005" name="Evol. Dev.">
        <title>Genomic annotation and transcriptome analysis of the zebrafish (Danio rerio) hox complex with description of a novel member, hoxb13a.</title>
        <authorList>
            <person name="Corredor-Adamez M."/>
            <person name="Welten M.C.M."/>
            <person name="Spaink H.P."/>
            <person name="Jeffery J.E."/>
            <person name="Schoon R.T."/>
            <person name="de Bakker M.A.G."/>
            <person name="Bagowski C.P."/>
            <person name="Meijer A.H."/>
            <person name="Verbeek F.J."/>
            <person name="Richardson M.K."/>
        </authorList>
    </citation>
    <scope>NUCLEOTIDE SEQUENCE [MRNA] OF 104-216</scope>
    <source>
        <strain>Tuebingen</strain>
    </source>
</reference>
<reference key="3">
    <citation type="journal article" date="2004" name="Dev. Biol.">
        <title>Differences in expression pattern and function between zebrafish hoxc13 orthologs: recruitment of Hoxc13b into an early embryonic role.</title>
        <authorList>
            <person name="Thummel R."/>
            <person name="Li L."/>
            <person name="Tanase C."/>
            <person name="Sarras M.P. Jr."/>
            <person name="Godwin A.R."/>
        </authorList>
    </citation>
    <scope>DEVELOPMENTAL STAGE</scope>
</reference>
<protein>
    <recommendedName>
        <fullName>Homeobox protein Hox-C12b</fullName>
    </recommendedName>
</protein>
<accession>Q9YGT0</accession>
<accession>Q4PR80</accession>
<organism>
    <name type="scientific">Danio rerio</name>
    <name type="common">Zebrafish</name>
    <name type="synonym">Brachydanio rerio</name>
    <dbReference type="NCBI Taxonomy" id="7955"/>
    <lineage>
        <taxon>Eukaryota</taxon>
        <taxon>Metazoa</taxon>
        <taxon>Chordata</taxon>
        <taxon>Craniata</taxon>
        <taxon>Vertebrata</taxon>
        <taxon>Euteleostomi</taxon>
        <taxon>Actinopterygii</taxon>
        <taxon>Neopterygii</taxon>
        <taxon>Teleostei</taxon>
        <taxon>Ostariophysi</taxon>
        <taxon>Cypriniformes</taxon>
        <taxon>Danionidae</taxon>
        <taxon>Danioninae</taxon>
        <taxon>Danio</taxon>
    </lineage>
</organism>
<proteinExistence type="evidence at transcript level"/>